<protein>
    <recommendedName>
        <fullName evidence="1">Small ribosomal subunit protein bS18</fullName>
    </recommendedName>
    <alternativeName>
        <fullName evidence="2">30S ribosomal protein S18</fullName>
    </alternativeName>
</protein>
<feature type="chain" id="PRO_0000345446" description="Small ribosomal subunit protein bS18">
    <location>
        <begin position="1"/>
        <end position="79"/>
    </location>
</feature>
<organism>
    <name type="scientific">Blochmanniella pennsylvanica (strain BPEN)</name>
    <dbReference type="NCBI Taxonomy" id="291272"/>
    <lineage>
        <taxon>Bacteria</taxon>
        <taxon>Pseudomonadati</taxon>
        <taxon>Pseudomonadota</taxon>
        <taxon>Gammaproteobacteria</taxon>
        <taxon>Enterobacterales</taxon>
        <taxon>Enterobacteriaceae</taxon>
        <taxon>ant endosymbionts</taxon>
        <taxon>Candidatus Blochmanniella</taxon>
    </lineage>
</organism>
<name>RS18_BLOPB</name>
<evidence type="ECO:0000255" key="1">
    <source>
        <dbReference type="HAMAP-Rule" id="MF_00270"/>
    </source>
</evidence>
<evidence type="ECO:0000305" key="2"/>
<accession>Q493V4</accession>
<proteinExistence type="inferred from homology"/>
<sequence length="79" mass="9419">MESIMARFVRHRKFCRFTAEKCINIDYKDLVTIQHSIIESGKIIPSRITGTRARYQRQLARAIKRARYLSLLPYTDHHQ</sequence>
<gene>
    <name evidence="1" type="primary">rpsR</name>
    <name type="ordered locus">BPEN_089</name>
</gene>
<reference key="1">
    <citation type="journal article" date="2005" name="Genome Res.">
        <title>Genome sequence of Blochmannia pennsylvanicus indicates parallel evolutionary trends among bacterial mutualists of insects.</title>
        <authorList>
            <person name="Degnan P.H."/>
            <person name="Lazarus A.B."/>
            <person name="Wernegreen J.J."/>
        </authorList>
    </citation>
    <scope>NUCLEOTIDE SEQUENCE [LARGE SCALE GENOMIC DNA]</scope>
    <source>
        <strain>BPEN</strain>
    </source>
</reference>
<comment type="function">
    <text evidence="1">Binds as a heterodimer with protein bS6 to the central domain of the 16S rRNA, where it helps stabilize the platform of the 30S subunit.</text>
</comment>
<comment type="subunit">
    <text evidence="1">Part of the 30S ribosomal subunit. Forms a tight heterodimer with protein bS6.</text>
</comment>
<comment type="similarity">
    <text evidence="1">Belongs to the bacterial ribosomal protein bS18 family.</text>
</comment>
<dbReference type="EMBL" id="CP000016">
    <property type="protein sequence ID" value="AAZ40732.1"/>
    <property type="molecule type" value="Genomic_DNA"/>
</dbReference>
<dbReference type="SMR" id="Q493V4"/>
<dbReference type="STRING" id="291272.BPEN_089"/>
<dbReference type="KEGG" id="bpn:BPEN_089"/>
<dbReference type="eggNOG" id="COG0238">
    <property type="taxonomic scope" value="Bacteria"/>
</dbReference>
<dbReference type="HOGENOM" id="CLU_148710_2_2_6"/>
<dbReference type="Proteomes" id="UP000007794">
    <property type="component" value="Chromosome"/>
</dbReference>
<dbReference type="GO" id="GO:0022627">
    <property type="term" value="C:cytosolic small ribosomal subunit"/>
    <property type="evidence" value="ECO:0007669"/>
    <property type="project" value="TreeGrafter"/>
</dbReference>
<dbReference type="GO" id="GO:0070181">
    <property type="term" value="F:small ribosomal subunit rRNA binding"/>
    <property type="evidence" value="ECO:0007669"/>
    <property type="project" value="TreeGrafter"/>
</dbReference>
<dbReference type="GO" id="GO:0003735">
    <property type="term" value="F:structural constituent of ribosome"/>
    <property type="evidence" value="ECO:0007669"/>
    <property type="project" value="InterPro"/>
</dbReference>
<dbReference type="GO" id="GO:0006412">
    <property type="term" value="P:translation"/>
    <property type="evidence" value="ECO:0007669"/>
    <property type="project" value="UniProtKB-UniRule"/>
</dbReference>
<dbReference type="Gene3D" id="4.10.640.10">
    <property type="entry name" value="Ribosomal protein S18"/>
    <property type="match status" value="1"/>
</dbReference>
<dbReference type="HAMAP" id="MF_00270">
    <property type="entry name" value="Ribosomal_bS18"/>
    <property type="match status" value="1"/>
</dbReference>
<dbReference type="InterPro" id="IPR001648">
    <property type="entry name" value="Ribosomal_bS18"/>
</dbReference>
<dbReference type="InterPro" id="IPR036870">
    <property type="entry name" value="Ribosomal_bS18_sf"/>
</dbReference>
<dbReference type="NCBIfam" id="TIGR00165">
    <property type="entry name" value="S18"/>
    <property type="match status" value="1"/>
</dbReference>
<dbReference type="PANTHER" id="PTHR13479">
    <property type="entry name" value="30S RIBOSOMAL PROTEIN S18"/>
    <property type="match status" value="1"/>
</dbReference>
<dbReference type="PANTHER" id="PTHR13479:SF40">
    <property type="entry name" value="SMALL RIBOSOMAL SUBUNIT PROTEIN BS18M"/>
    <property type="match status" value="1"/>
</dbReference>
<dbReference type="Pfam" id="PF01084">
    <property type="entry name" value="Ribosomal_S18"/>
    <property type="match status" value="1"/>
</dbReference>
<dbReference type="PRINTS" id="PR00974">
    <property type="entry name" value="RIBOSOMALS18"/>
</dbReference>
<dbReference type="SUPFAM" id="SSF46911">
    <property type="entry name" value="Ribosomal protein S18"/>
    <property type="match status" value="1"/>
</dbReference>
<keyword id="KW-1185">Reference proteome</keyword>
<keyword id="KW-0687">Ribonucleoprotein</keyword>
<keyword id="KW-0689">Ribosomal protein</keyword>
<keyword id="KW-0694">RNA-binding</keyword>
<keyword id="KW-0699">rRNA-binding</keyword>